<accession>P0A125</accession>
<accession>P25757</accession>
<sequence>MSSLVTPQHAEELSTGARQLGVELTAEQHEKLLGYLALLIKWNKAYNLTAVRDPDEMVSRHLLDSLSVMSFIHNDRDNWLDVGSGGGMPGIPLAILHPHKRVTVLDANGKKTRFLTQVKMELKLDNLTVIHSRVEAFQPAQPFDGIISRAFSSMENFTNWTRHLGDTGTQWLAMKGLHPADELVALPADFTVESEQALTVPGCQGQRHLLILRRKA</sequence>
<comment type="function">
    <text evidence="1">Specifically methylates the N7 position of guanine in position 527 of 16S rRNA.</text>
</comment>
<comment type="catalytic activity">
    <reaction evidence="1">
        <text>guanosine(527) in 16S rRNA + S-adenosyl-L-methionine = N(7)-methylguanosine(527) in 16S rRNA + S-adenosyl-L-homocysteine</text>
        <dbReference type="Rhea" id="RHEA:42732"/>
        <dbReference type="Rhea" id="RHEA-COMP:10209"/>
        <dbReference type="Rhea" id="RHEA-COMP:10210"/>
        <dbReference type="ChEBI" id="CHEBI:57856"/>
        <dbReference type="ChEBI" id="CHEBI:59789"/>
        <dbReference type="ChEBI" id="CHEBI:74269"/>
        <dbReference type="ChEBI" id="CHEBI:74480"/>
        <dbReference type="EC" id="2.1.1.170"/>
    </reaction>
</comment>
<comment type="subcellular location">
    <subcellularLocation>
        <location evidence="1">Cytoplasm</location>
    </subcellularLocation>
</comment>
<comment type="similarity">
    <text evidence="1">Belongs to the methyltransferase superfamily. RNA methyltransferase RsmG family.</text>
</comment>
<reference key="1">
    <citation type="journal article" date="1992" name="Mol. Microbiol.">
        <title>Genes and their organization in the replication origin region of the bacterial chromosome.</title>
        <authorList>
            <person name="Ogasawara N."/>
            <person name="Yoshikawa H."/>
        </authorList>
    </citation>
    <scope>NUCLEOTIDE SEQUENCE [GENOMIC DNA]</scope>
    <source>
        <strain>TN2100</strain>
    </source>
</reference>
<protein>
    <recommendedName>
        <fullName evidence="1">Ribosomal RNA small subunit methyltransferase G</fullName>
        <ecNumber evidence="1">2.1.1.170</ecNumber>
    </recommendedName>
    <alternativeName>
        <fullName evidence="1">16S rRNA 7-methylguanosine methyltransferase</fullName>
        <shortName evidence="1">16S rRNA m7G methyltransferase</shortName>
    </alternativeName>
    <alternativeName>
        <fullName>Glucose-inhibited division protein B</fullName>
    </alternativeName>
</protein>
<feature type="chain" id="PRO_0000184308" description="Ribosomal RNA small subunit methyltransferase G">
    <location>
        <begin position="1"/>
        <end position="216"/>
    </location>
</feature>
<feature type="binding site" evidence="1">
    <location>
        <position position="83"/>
    </location>
    <ligand>
        <name>S-adenosyl-L-methionine</name>
        <dbReference type="ChEBI" id="CHEBI:59789"/>
    </ligand>
</feature>
<feature type="binding site" evidence="1">
    <location>
        <position position="88"/>
    </location>
    <ligand>
        <name>S-adenosyl-L-methionine</name>
        <dbReference type="ChEBI" id="CHEBI:59789"/>
    </ligand>
</feature>
<feature type="binding site" evidence="1">
    <location>
        <begin position="134"/>
        <end position="135"/>
    </location>
    <ligand>
        <name>S-adenosyl-L-methionine</name>
        <dbReference type="ChEBI" id="CHEBI:59789"/>
    </ligand>
</feature>
<feature type="binding site" evidence="1">
    <location>
        <position position="149"/>
    </location>
    <ligand>
        <name>S-adenosyl-L-methionine</name>
        <dbReference type="ChEBI" id="CHEBI:59789"/>
    </ligand>
</feature>
<gene>
    <name evidence="1" type="primary">rsmG</name>
    <name type="synonym">gidB</name>
</gene>
<proteinExistence type="inferred from homology"/>
<organism>
    <name type="scientific">Pseudomonas putida</name>
    <name type="common">Arthrobacter siderocapsulatus</name>
    <dbReference type="NCBI Taxonomy" id="303"/>
    <lineage>
        <taxon>Bacteria</taxon>
        <taxon>Pseudomonadati</taxon>
        <taxon>Pseudomonadota</taxon>
        <taxon>Gammaproteobacteria</taxon>
        <taxon>Pseudomonadales</taxon>
        <taxon>Pseudomonadaceae</taxon>
        <taxon>Pseudomonas</taxon>
    </lineage>
</organism>
<keyword id="KW-0963">Cytoplasm</keyword>
<keyword id="KW-0489">Methyltransferase</keyword>
<keyword id="KW-0698">rRNA processing</keyword>
<keyword id="KW-0949">S-adenosyl-L-methionine</keyword>
<keyword id="KW-0808">Transferase</keyword>
<dbReference type="EC" id="2.1.1.170" evidence="1"/>
<dbReference type="EMBL" id="X62540">
    <property type="protein sequence ID" value="CAA44420.1"/>
    <property type="molecule type" value="Genomic_DNA"/>
</dbReference>
<dbReference type="PIR" id="JQ1224">
    <property type="entry name" value="BWPSBP"/>
</dbReference>
<dbReference type="RefSeq" id="WP_003253179.1">
    <property type="nucleotide sequence ID" value="NZ_SCFX01000019.1"/>
</dbReference>
<dbReference type="SMR" id="P0A125"/>
<dbReference type="GeneID" id="83683236"/>
<dbReference type="PATRIC" id="fig|303.175.peg.27"/>
<dbReference type="eggNOG" id="COG0357">
    <property type="taxonomic scope" value="Bacteria"/>
</dbReference>
<dbReference type="OMA" id="AGMPNKK"/>
<dbReference type="GO" id="GO:0005829">
    <property type="term" value="C:cytosol"/>
    <property type="evidence" value="ECO:0007669"/>
    <property type="project" value="TreeGrafter"/>
</dbReference>
<dbReference type="GO" id="GO:0070043">
    <property type="term" value="F:rRNA (guanine-N7-)-methyltransferase activity"/>
    <property type="evidence" value="ECO:0007669"/>
    <property type="project" value="UniProtKB-UniRule"/>
</dbReference>
<dbReference type="CDD" id="cd02440">
    <property type="entry name" value="AdoMet_MTases"/>
    <property type="match status" value="1"/>
</dbReference>
<dbReference type="Gene3D" id="3.40.50.150">
    <property type="entry name" value="Vaccinia Virus protein VP39"/>
    <property type="match status" value="1"/>
</dbReference>
<dbReference type="HAMAP" id="MF_00074">
    <property type="entry name" value="16SrRNA_methyltr_G"/>
    <property type="match status" value="1"/>
</dbReference>
<dbReference type="InterPro" id="IPR003682">
    <property type="entry name" value="rRNA_ssu_MeTfrase_G"/>
</dbReference>
<dbReference type="InterPro" id="IPR029063">
    <property type="entry name" value="SAM-dependent_MTases_sf"/>
</dbReference>
<dbReference type="NCBIfam" id="TIGR00138">
    <property type="entry name" value="rsmG_gidB"/>
    <property type="match status" value="1"/>
</dbReference>
<dbReference type="PANTHER" id="PTHR31760">
    <property type="entry name" value="S-ADENOSYL-L-METHIONINE-DEPENDENT METHYLTRANSFERASES SUPERFAMILY PROTEIN"/>
    <property type="match status" value="1"/>
</dbReference>
<dbReference type="PANTHER" id="PTHR31760:SF0">
    <property type="entry name" value="S-ADENOSYL-L-METHIONINE-DEPENDENT METHYLTRANSFERASES SUPERFAMILY PROTEIN"/>
    <property type="match status" value="1"/>
</dbReference>
<dbReference type="Pfam" id="PF02527">
    <property type="entry name" value="GidB"/>
    <property type="match status" value="1"/>
</dbReference>
<dbReference type="PIRSF" id="PIRSF003078">
    <property type="entry name" value="GidB"/>
    <property type="match status" value="1"/>
</dbReference>
<dbReference type="SUPFAM" id="SSF53335">
    <property type="entry name" value="S-adenosyl-L-methionine-dependent methyltransferases"/>
    <property type="match status" value="1"/>
</dbReference>
<evidence type="ECO:0000255" key="1">
    <source>
        <dbReference type="HAMAP-Rule" id="MF_00074"/>
    </source>
</evidence>
<name>RSMG_PSEPU</name>